<gene>
    <name evidence="1" type="primary">glmM</name>
    <name type="synonym">pmmB</name>
    <name type="ordered locus">MA_3024</name>
</gene>
<evidence type="ECO:0000255" key="1">
    <source>
        <dbReference type="HAMAP-Rule" id="MF_01554"/>
    </source>
</evidence>
<evidence type="ECO:0000305" key="2"/>
<proteinExistence type="inferred from homology"/>
<organism>
    <name type="scientific">Methanosarcina acetivorans (strain ATCC 35395 / DSM 2834 / JCM 12185 / C2A)</name>
    <dbReference type="NCBI Taxonomy" id="188937"/>
    <lineage>
        <taxon>Archaea</taxon>
        <taxon>Methanobacteriati</taxon>
        <taxon>Methanobacteriota</taxon>
        <taxon>Stenosarchaea group</taxon>
        <taxon>Methanomicrobia</taxon>
        <taxon>Methanosarcinales</taxon>
        <taxon>Methanosarcinaceae</taxon>
        <taxon>Methanosarcina</taxon>
    </lineage>
</organism>
<accession>Q8TLL2</accession>
<dbReference type="EC" id="5.4.2.10" evidence="1"/>
<dbReference type="EMBL" id="AE010299">
    <property type="protein sequence ID" value="AAM06397.1"/>
    <property type="status" value="ALT_INIT"/>
    <property type="molecule type" value="Genomic_DNA"/>
</dbReference>
<dbReference type="RefSeq" id="WP_048065583.1">
    <property type="nucleotide sequence ID" value="NC_003552.1"/>
</dbReference>
<dbReference type="SMR" id="Q8TLL2"/>
<dbReference type="FunCoup" id="Q8TLL2">
    <property type="interactions" value="94"/>
</dbReference>
<dbReference type="STRING" id="188937.MA_3024"/>
<dbReference type="EnsemblBacteria" id="AAM06397">
    <property type="protein sequence ID" value="AAM06397"/>
    <property type="gene ID" value="MA_3024"/>
</dbReference>
<dbReference type="GeneID" id="1474918"/>
<dbReference type="KEGG" id="mac:MA_3024"/>
<dbReference type="HOGENOM" id="CLU_016950_7_1_2"/>
<dbReference type="InParanoid" id="Q8TLL2"/>
<dbReference type="OrthoDB" id="10363at2157"/>
<dbReference type="PhylomeDB" id="Q8TLL2"/>
<dbReference type="Proteomes" id="UP000002487">
    <property type="component" value="Chromosome"/>
</dbReference>
<dbReference type="GO" id="GO:0000287">
    <property type="term" value="F:magnesium ion binding"/>
    <property type="evidence" value="ECO:0007669"/>
    <property type="project" value="UniProtKB-UniRule"/>
</dbReference>
<dbReference type="GO" id="GO:0008966">
    <property type="term" value="F:phosphoglucosamine mutase activity"/>
    <property type="evidence" value="ECO:0007669"/>
    <property type="project" value="UniProtKB-UniRule"/>
</dbReference>
<dbReference type="GO" id="GO:0004615">
    <property type="term" value="F:phosphomannomutase activity"/>
    <property type="evidence" value="ECO:0000318"/>
    <property type="project" value="GO_Central"/>
</dbReference>
<dbReference type="GO" id="GO:0005975">
    <property type="term" value="P:carbohydrate metabolic process"/>
    <property type="evidence" value="ECO:0007669"/>
    <property type="project" value="InterPro"/>
</dbReference>
<dbReference type="CDD" id="cd03087">
    <property type="entry name" value="PGM_like1"/>
    <property type="match status" value="1"/>
</dbReference>
<dbReference type="FunFam" id="3.40.120.10:FF:000001">
    <property type="entry name" value="Phosphoglucosamine mutase"/>
    <property type="match status" value="1"/>
</dbReference>
<dbReference type="FunFam" id="3.40.120.10:FF:000003">
    <property type="entry name" value="Phosphoglucosamine mutase"/>
    <property type="match status" value="1"/>
</dbReference>
<dbReference type="FunFam" id="3.30.310.50:FF:000009">
    <property type="entry name" value="Probable phosphoglucosamine mutase"/>
    <property type="match status" value="1"/>
</dbReference>
<dbReference type="Gene3D" id="3.40.120.10">
    <property type="entry name" value="Alpha-D-Glucose-1,6-Bisphosphate, subunit A, domain 3"/>
    <property type="match status" value="3"/>
</dbReference>
<dbReference type="Gene3D" id="3.30.310.50">
    <property type="entry name" value="Alpha-D-phosphohexomutase, C-terminal domain"/>
    <property type="match status" value="1"/>
</dbReference>
<dbReference type="HAMAP" id="MF_01554_A">
    <property type="entry name" value="GlmM_A"/>
    <property type="match status" value="1"/>
</dbReference>
<dbReference type="InterPro" id="IPR005844">
    <property type="entry name" value="A-D-PHexomutase_a/b/a-I"/>
</dbReference>
<dbReference type="InterPro" id="IPR016055">
    <property type="entry name" value="A-D-PHexomutase_a/b/a-I/II/III"/>
</dbReference>
<dbReference type="InterPro" id="IPR005845">
    <property type="entry name" value="A-D-PHexomutase_a/b/a-II"/>
</dbReference>
<dbReference type="InterPro" id="IPR005846">
    <property type="entry name" value="A-D-PHexomutase_a/b/a-III"/>
</dbReference>
<dbReference type="InterPro" id="IPR005843">
    <property type="entry name" value="A-D-PHexomutase_C"/>
</dbReference>
<dbReference type="InterPro" id="IPR036900">
    <property type="entry name" value="A-D-PHexomutase_C_sf"/>
</dbReference>
<dbReference type="InterPro" id="IPR016066">
    <property type="entry name" value="A-D-PHexomutase_CS"/>
</dbReference>
<dbReference type="InterPro" id="IPR005841">
    <property type="entry name" value="Alpha-D-phosphohexomutase_SF"/>
</dbReference>
<dbReference type="InterPro" id="IPR023666">
    <property type="entry name" value="GlmM_arc"/>
</dbReference>
<dbReference type="InterPro" id="IPR024086">
    <property type="entry name" value="GlmM_arc-type"/>
</dbReference>
<dbReference type="NCBIfam" id="TIGR03990">
    <property type="entry name" value="Arch_GlmM"/>
    <property type="match status" value="1"/>
</dbReference>
<dbReference type="PANTHER" id="PTHR43771">
    <property type="entry name" value="PHOSPHOMANNOMUTASE"/>
    <property type="match status" value="1"/>
</dbReference>
<dbReference type="PANTHER" id="PTHR43771:SF1">
    <property type="entry name" value="PHOSPHOMANNOMUTASE"/>
    <property type="match status" value="1"/>
</dbReference>
<dbReference type="Pfam" id="PF02878">
    <property type="entry name" value="PGM_PMM_I"/>
    <property type="match status" value="1"/>
</dbReference>
<dbReference type="Pfam" id="PF02879">
    <property type="entry name" value="PGM_PMM_II"/>
    <property type="match status" value="1"/>
</dbReference>
<dbReference type="Pfam" id="PF02880">
    <property type="entry name" value="PGM_PMM_III"/>
    <property type="match status" value="1"/>
</dbReference>
<dbReference type="Pfam" id="PF00408">
    <property type="entry name" value="PGM_PMM_IV"/>
    <property type="match status" value="1"/>
</dbReference>
<dbReference type="PRINTS" id="PR00509">
    <property type="entry name" value="PGMPMM"/>
</dbReference>
<dbReference type="SUPFAM" id="SSF55957">
    <property type="entry name" value="Phosphoglucomutase, C-terminal domain"/>
    <property type="match status" value="1"/>
</dbReference>
<dbReference type="SUPFAM" id="SSF53738">
    <property type="entry name" value="Phosphoglucomutase, first 3 domains"/>
    <property type="match status" value="3"/>
</dbReference>
<dbReference type="PROSITE" id="PS00710">
    <property type="entry name" value="PGM_PMM"/>
    <property type="match status" value="1"/>
</dbReference>
<protein>
    <recommendedName>
        <fullName evidence="1">Probable phosphoglucosamine mutase</fullName>
        <ecNumber evidence="1">5.4.2.10</ecNumber>
    </recommendedName>
</protein>
<reference key="1">
    <citation type="journal article" date="2002" name="Genome Res.">
        <title>The genome of Methanosarcina acetivorans reveals extensive metabolic and physiological diversity.</title>
        <authorList>
            <person name="Galagan J.E."/>
            <person name="Nusbaum C."/>
            <person name="Roy A."/>
            <person name="Endrizzi M.G."/>
            <person name="Macdonald P."/>
            <person name="FitzHugh W."/>
            <person name="Calvo S."/>
            <person name="Engels R."/>
            <person name="Smirnov S."/>
            <person name="Atnoor D."/>
            <person name="Brown A."/>
            <person name="Allen N."/>
            <person name="Naylor J."/>
            <person name="Stange-Thomann N."/>
            <person name="DeArellano K."/>
            <person name="Johnson R."/>
            <person name="Linton L."/>
            <person name="McEwan P."/>
            <person name="McKernan K."/>
            <person name="Talamas J."/>
            <person name="Tirrell A."/>
            <person name="Ye W."/>
            <person name="Zimmer A."/>
            <person name="Barber R.D."/>
            <person name="Cann I."/>
            <person name="Graham D.E."/>
            <person name="Grahame D.A."/>
            <person name="Guss A.M."/>
            <person name="Hedderich R."/>
            <person name="Ingram-Smith C."/>
            <person name="Kuettner H.C."/>
            <person name="Krzycki J.A."/>
            <person name="Leigh J.A."/>
            <person name="Li W."/>
            <person name="Liu J."/>
            <person name="Mukhopadhyay B."/>
            <person name="Reeve J.N."/>
            <person name="Smith K."/>
            <person name="Springer T.A."/>
            <person name="Umayam L.A."/>
            <person name="White O."/>
            <person name="White R.H."/>
            <person name="de Macario E.C."/>
            <person name="Ferry J.G."/>
            <person name="Jarrell K.F."/>
            <person name="Jing H."/>
            <person name="Macario A.J.L."/>
            <person name="Paulsen I.T."/>
            <person name="Pritchett M."/>
            <person name="Sowers K.R."/>
            <person name="Swanson R.V."/>
            <person name="Zinder S.H."/>
            <person name="Lander E."/>
            <person name="Metcalf W.W."/>
            <person name="Birren B."/>
        </authorList>
    </citation>
    <scope>NUCLEOTIDE SEQUENCE [LARGE SCALE GENOMIC DNA]</scope>
    <source>
        <strain>ATCC 35395 / DSM 2834 / JCM 12185 / C2A</strain>
    </source>
</reference>
<comment type="function">
    <text evidence="1">Catalyzes the conversion of glucosamine-6-phosphate to glucosamine-1-phosphate.</text>
</comment>
<comment type="catalytic activity">
    <reaction evidence="1">
        <text>alpha-D-glucosamine 1-phosphate = D-glucosamine 6-phosphate</text>
        <dbReference type="Rhea" id="RHEA:23424"/>
        <dbReference type="ChEBI" id="CHEBI:58516"/>
        <dbReference type="ChEBI" id="CHEBI:58725"/>
        <dbReference type="EC" id="5.4.2.10"/>
    </reaction>
</comment>
<comment type="cofactor">
    <cofactor evidence="1">
        <name>Mg(2+)</name>
        <dbReference type="ChEBI" id="CHEBI:18420"/>
    </cofactor>
    <text evidence="1">Binds 1 Mg(2+) ion per subunit.</text>
</comment>
<comment type="PTM">
    <text evidence="1">Activated by phosphorylation.</text>
</comment>
<comment type="similarity">
    <text evidence="1">Belongs to the phosphohexose mutase family.</text>
</comment>
<comment type="sequence caution" evidence="2">
    <conflict type="erroneous initiation">
        <sequence resource="EMBL-CDS" id="AAM06397"/>
    </conflict>
</comment>
<name>GLMM_METAC</name>
<feature type="chain" id="PRO_0000337818" description="Probable phosphoglucosamine mutase">
    <location>
        <begin position="1"/>
        <end position="434"/>
    </location>
</feature>
<feature type="active site" description="Phosphoserine intermediate" evidence="1">
    <location>
        <position position="91"/>
    </location>
</feature>
<feature type="binding site" description="via phosphate group" evidence="1">
    <location>
        <position position="91"/>
    </location>
    <ligand>
        <name>Mg(2+)</name>
        <dbReference type="ChEBI" id="CHEBI:18420"/>
    </ligand>
</feature>
<feature type="binding site" evidence="1">
    <location>
        <position position="229"/>
    </location>
    <ligand>
        <name>Mg(2+)</name>
        <dbReference type="ChEBI" id="CHEBI:18420"/>
    </ligand>
</feature>
<feature type="binding site" evidence="1">
    <location>
        <position position="231"/>
    </location>
    <ligand>
        <name>Mg(2+)</name>
        <dbReference type="ChEBI" id="CHEBI:18420"/>
    </ligand>
</feature>
<feature type="binding site" evidence="1">
    <location>
        <position position="233"/>
    </location>
    <ligand>
        <name>Mg(2+)</name>
        <dbReference type="ChEBI" id="CHEBI:18420"/>
    </ligand>
</feature>
<feature type="modified residue" description="Phosphoserine" evidence="1">
    <location>
        <position position="91"/>
    </location>
</feature>
<keyword id="KW-0413">Isomerase</keyword>
<keyword id="KW-0460">Magnesium</keyword>
<keyword id="KW-0479">Metal-binding</keyword>
<keyword id="KW-0597">Phosphoprotein</keyword>
<keyword id="KW-1185">Reference proteome</keyword>
<sequence length="434" mass="47284">MKLFGSSGIRGIVNKEVTPELALQVGLVLGSRKKTAVIGRDPRVSAPMIEHALVAGLTAAGCDVTKVGMVTTPTLAYAAREYECGVMVTASHNPSEYVGIKLWNPDGMAFDSAQQEEIEDAIENENFLRVTWDLIGKVAENGNAIRDHMDLIEGLVRDSKLRVVLDCGCGAGSTITPYLLQELGCQVITLNSQPDGHFPARNPEPNDQNLSLLKKAVVAFEADFGIAHDGDADRMMAVDEKGNFVSGDELLAIFGRFECGDEKGTVVVPVDTSMMVDDYLEGSEIIRTRVGDVYVAEGIKQYGAIYGGEPSGSWIFPKISYCPDGIYAAAKLVEIVREKKLSELRAELPVYATKRGAFPCANEKKAELMEKVKTKLEPLGKVLDIDGIRVELENGWVLVRPSGTEAKVRITAEAREKVDEIYEMAEKIVKEALK</sequence>